<accession>A5FP03</accession>
<sequence length="65" mass="7496">MPKMKTKSSAKKRFKVTGSGKIKRKHAFKSHILTKKSKKRKLALTHSALVHKTDEKSIKQQLRII</sequence>
<proteinExistence type="inferred from homology"/>
<keyword id="KW-0687">Ribonucleoprotein</keyword>
<keyword id="KW-0689">Ribosomal protein</keyword>
<name>RL35_FLAJ1</name>
<gene>
    <name evidence="1" type="primary">rpmI</name>
    <name type="ordered locus">Fjoh_0026</name>
</gene>
<evidence type="ECO:0000255" key="1">
    <source>
        <dbReference type="HAMAP-Rule" id="MF_00514"/>
    </source>
</evidence>
<evidence type="ECO:0000256" key="2">
    <source>
        <dbReference type="SAM" id="MobiDB-lite"/>
    </source>
</evidence>
<evidence type="ECO:0000305" key="3"/>
<dbReference type="EMBL" id="CP000685">
    <property type="protein sequence ID" value="ABQ03064.1"/>
    <property type="molecule type" value="Genomic_DNA"/>
</dbReference>
<dbReference type="RefSeq" id="WP_011921545.1">
    <property type="nucleotide sequence ID" value="NZ_MUGZ01000005.1"/>
</dbReference>
<dbReference type="SMR" id="A5FP03"/>
<dbReference type="STRING" id="376686.Fjoh_0026"/>
<dbReference type="KEGG" id="fjo:Fjoh_0026"/>
<dbReference type="eggNOG" id="COG0291">
    <property type="taxonomic scope" value="Bacteria"/>
</dbReference>
<dbReference type="HOGENOM" id="CLU_169643_1_1_10"/>
<dbReference type="OrthoDB" id="47476at2"/>
<dbReference type="Proteomes" id="UP000006694">
    <property type="component" value="Chromosome"/>
</dbReference>
<dbReference type="GO" id="GO:0022625">
    <property type="term" value="C:cytosolic large ribosomal subunit"/>
    <property type="evidence" value="ECO:0007669"/>
    <property type="project" value="TreeGrafter"/>
</dbReference>
<dbReference type="GO" id="GO:0003735">
    <property type="term" value="F:structural constituent of ribosome"/>
    <property type="evidence" value="ECO:0007669"/>
    <property type="project" value="InterPro"/>
</dbReference>
<dbReference type="GO" id="GO:0006412">
    <property type="term" value="P:translation"/>
    <property type="evidence" value="ECO:0007669"/>
    <property type="project" value="UniProtKB-UniRule"/>
</dbReference>
<dbReference type="FunFam" id="4.10.410.60:FF:000001">
    <property type="entry name" value="50S ribosomal protein L35"/>
    <property type="match status" value="1"/>
</dbReference>
<dbReference type="Gene3D" id="4.10.410.60">
    <property type="match status" value="1"/>
</dbReference>
<dbReference type="HAMAP" id="MF_00514">
    <property type="entry name" value="Ribosomal_bL35"/>
    <property type="match status" value="1"/>
</dbReference>
<dbReference type="InterPro" id="IPR001706">
    <property type="entry name" value="Ribosomal_bL35"/>
</dbReference>
<dbReference type="InterPro" id="IPR021137">
    <property type="entry name" value="Ribosomal_bL35-like"/>
</dbReference>
<dbReference type="InterPro" id="IPR018265">
    <property type="entry name" value="Ribosomal_bL35_CS"/>
</dbReference>
<dbReference type="InterPro" id="IPR037229">
    <property type="entry name" value="Ribosomal_bL35_sf"/>
</dbReference>
<dbReference type="NCBIfam" id="TIGR00001">
    <property type="entry name" value="rpmI_bact"/>
    <property type="match status" value="1"/>
</dbReference>
<dbReference type="PANTHER" id="PTHR33343">
    <property type="entry name" value="54S RIBOSOMAL PROTEIN BL35M"/>
    <property type="match status" value="1"/>
</dbReference>
<dbReference type="PANTHER" id="PTHR33343:SF1">
    <property type="entry name" value="LARGE RIBOSOMAL SUBUNIT PROTEIN BL35M"/>
    <property type="match status" value="1"/>
</dbReference>
<dbReference type="Pfam" id="PF01632">
    <property type="entry name" value="Ribosomal_L35p"/>
    <property type="match status" value="1"/>
</dbReference>
<dbReference type="PRINTS" id="PR00064">
    <property type="entry name" value="RIBOSOMALL35"/>
</dbReference>
<dbReference type="SUPFAM" id="SSF143034">
    <property type="entry name" value="L35p-like"/>
    <property type="match status" value="1"/>
</dbReference>
<dbReference type="PROSITE" id="PS00936">
    <property type="entry name" value="RIBOSOMAL_L35"/>
    <property type="match status" value="1"/>
</dbReference>
<comment type="similarity">
    <text evidence="1">Belongs to the bacterial ribosomal protein bL35 family.</text>
</comment>
<feature type="chain" id="PRO_1000081609" description="Large ribosomal subunit protein bL35">
    <location>
        <begin position="1"/>
        <end position="65"/>
    </location>
</feature>
<feature type="region of interest" description="Disordered" evidence="2">
    <location>
        <begin position="1"/>
        <end position="22"/>
    </location>
</feature>
<reference key="1">
    <citation type="journal article" date="2009" name="Appl. Environ. Microbiol.">
        <title>Novel features of the polysaccharide-digesting gliding bacterium Flavobacterium johnsoniae as revealed by genome sequence analysis.</title>
        <authorList>
            <person name="McBride M.J."/>
            <person name="Xie G."/>
            <person name="Martens E.C."/>
            <person name="Lapidus A."/>
            <person name="Henrissat B."/>
            <person name="Rhodes R.G."/>
            <person name="Goltsman E."/>
            <person name="Wang W."/>
            <person name="Xu J."/>
            <person name="Hunnicutt D.W."/>
            <person name="Staroscik A.M."/>
            <person name="Hoover T.R."/>
            <person name="Cheng Y.Q."/>
            <person name="Stein J.L."/>
        </authorList>
    </citation>
    <scope>NUCLEOTIDE SEQUENCE [LARGE SCALE GENOMIC DNA]</scope>
    <source>
        <strain>ATCC 17061 / DSM 2064 / JCM 8514 / BCRC 14874 / CCUG 350202 / NBRC 14942 / NCIMB 11054 / UW101</strain>
    </source>
</reference>
<organism>
    <name type="scientific">Flavobacterium johnsoniae (strain ATCC 17061 / DSM 2064 / JCM 8514 / BCRC 14874 / CCUG 350202 / NBRC 14942 / NCIMB 11054 / UW101)</name>
    <name type="common">Cytophaga johnsonae</name>
    <dbReference type="NCBI Taxonomy" id="376686"/>
    <lineage>
        <taxon>Bacteria</taxon>
        <taxon>Pseudomonadati</taxon>
        <taxon>Bacteroidota</taxon>
        <taxon>Flavobacteriia</taxon>
        <taxon>Flavobacteriales</taxon>
        <taxon>Flavobacteriaceae</taxon>
        <taxon>Flavobacterium</taxon>
    </lineage>
</organism>
<protein>
    <recommendedName>
        <fullName evidence="1">Large ribosomal subunit protein bL35</fullName>
    </recommendedName>
    <alternativeName>
        <fullName evidence="3">50S ribosomal protein L35</fullName>
    </alternativeName>
</protein>